<keyword id="KW-0002">3D-structure</keyword>
<keyword id="KW-1221">Calcium-activated potassium channel impairing toxin</keyword>
<keyword id="KW-0903">Direct protein sequencing</keyword>
<keyword id="KW-1015">Disulfide bond</keyword>
<keyword id="KW-0872">Ion channel impairing toxin</keyword>
<keyword id="KW-0528">Neurotoxin</keyword>
<keyword id="KW-0632">Potassium channel impairing toxin</keyword>
<keyword id="KW-0873">Pyrrolidone carboxylic acid</keyword>
<keyword id="KW-0964">Secreted</keyword>
<keyword id="KW-0732">Signal</keyword>
<keyword id="KW-0800">Toxin</keyword>
<evidence type="ECO:0000250" key="1"/>
<evidence type="ECO:0000255" key="2"/>
<evidence type="ECO:0000269" key="3">
    <source>
    </source>
</evidence>
<evidence type="ECO:0000269" key="4">
    <source>
    </source>
</evidence>
<evidence type="ECO:0000269" key="5">
    <source>
    </source>
</evidence>
<evidence type="ECO:0000303" key="6">
    <source>
    </source>
</evidence>
<evidence type="ECO:0000303" key="7">
    <source>
    </source>
</evidence>
<evidence type="ECO:0000305" key="8"/>
<evidence type="ECO:0000305" key="9">
    <source>
    </source>
</evidence>
<evidence type="ECO:0000312" key="10">
    <source>
        <dbReference type="PDB" id="1LIR"/>
    </source>
</evidence>
<evidence type="ECO:0007829" key="11">
    <source>
        <dbReference type="PDB" id="1LIR"/>
    </source>
</evidence>
<comment type="function">
    <text evidence="4 5">Blocks calcium-activated potassium channels (Kd=43 nM on KCa1.1/KCNMA1). Has a potent presynaptic facilitatory action, with less effect on direct muscle stimulation.</text>
</comment>
<comment type="subcellular location">
    <subcellularLocation>
        <location evidence="4">Secreted</location>
    </subcellularLocation>
</comment>
<comment type="tissue specificity">
    <text evidence="9">Expressed by the venom gland.</text>
</comment>
<comment type="domain">
    <text evidence="3">Has the structural arrangement of an alpha-helix connected to a beta-sheet by disulfide bonds (CSalpha/beta).</text>
</comment>
<comment type="similarity">
    <text evidence="8">Belongs to the short scorpion toxin superfamily. Potassium channel inhibitor family. Alpha-KTx 01 subfamily.</text>
</comment>
<name>KAX12_LEIHE</name>
<reference key="1">
    <citation type="journal article" date="1999" name="J. Mol. Evol.">
        <title>Dynamic diversification from a putative common ancestor of scorpion toxins affecting sodium, potassium, and chloride channels.</title>
        <authorList>
            <person name="Froy O."/>
            <person name="Sagiv T."/>
            <person name="Poreh M."/>
            <person name="Urbach D."/>
            <person name="Zilberberg N."/>
            <person name="Gurevitz M."/>
        </authorList>
    </citation>
    <scope>NUCLEOTIDE SEQUENCE [GENOMIC DNA]</scope>
    <source>
        <tissue>Single abdominal segment</tissue>
    </source>
</reference>
<reference key="2">
    <citation type="journal article" date="1989" name="J. Membr. Biol.">
        <title>Analysis of the blocking activity of charybdotoxin homologs and iodinated derivatives against Ca2+-activated K+ channels.</title>
        <authorList>
            <person name="Lucchesi K."/>
            <person name="Ravindran A."/>
            <person name="Young H."/>
            <person name="Moczydlowski E."/>
        </authorList>
    </citation>
    <scope>PROTEIN SEQUENCE OF 23-59</scope>
    <scope>FUNCTION</scope>
    <scope>SUBCELLULAR LOCATION</scope>
    <scope>PYROGLUTAMATE FORMATION AT GLN-23</scope>
    <source>
        <tissue>Venom</tissue>
    </source>
</reference>
<reference key="3">
    <citation type="journal article" date="1994" name="Toxicon">
        <title>Neuromuscular effects of some potassium channel blocking toxins from the venom of the scorpion Leiurus quinquestriatus hebreus.</title>
        <authorList>
            <person name="Marshall D.L."/>
            <person name="Vatanpour H."/>
            <person name="Harvey A.L."/>
            <person name="Boyot P."/>
            <person name="Pinkasfeld S."/>
            <person name="Doljansky Y."/>
            <person name="Bouet F."/>
            <person name="Menez A."/>
        </authorList>
    </citation>
    <scope>PROTEIN SEQUENCE OF 28-59</scope>
    <scope>FUNCTION</scope>
    <source>
        <tissue>Venom</tissue>
    </source>
</reference>
<reference key="4">
    <citation type="journal article" date="1999" name="Proteins">
        <title>Solution structure of potassium channel-inhibiting scorpion toxin Lq2.</title>
        <authorList>
            <person name="Renisio J.-G."/>
            <person name="Lu Z."/>
            <person name="Blanc E."/>
            <person name="Jin W."/>
            <person name="Lewis J.H."/>
            <person name="Bornet O."/>
            <person name="Darbon H."/>
        </authorList>
    </citation>
    <scope>STRUCTURE BY NMR</scope>
    <scope>DISULFIDE BONDS</scope>
</reference>
<dbReference type="PIR" id="B60963">
    <property type="entry name" value="B60963"/>
</dbReference>
<dbReference type="PDB" id="1LIR">
    <property type="method" value="NMR"/>
    <property type="chains" value="A=24-59"/>
</dbReference>
<dbReference type="PDBsum" id="1LIR"/>
<dbReference type="SMR" id="P45628"/>
<dbReference type="EvolutionaryTrace" id="P45628"/>
<dbReference type="GO" id="GO:0005576">
    <property type="term" value="C:extracellular region"/>
    <property type="evidence" value="ECO:0007669"/>
    <property type="project" value="UniProtKB-SubCell"/>
</dbReference>
<dbReference type="GO" id="GO:0008200">
    <property type="term" value="F:ion channel inhibitor activity"/>
    <property type="evidence" value="ECO:0007669"/>
    <property type="project" value="InterPro"/>
</dbReference>
<dbReference type="GO" id="GO:0015459">
    <property type="term" value="F:potassium channel regulator activity"/>
    <property type="evidence" value="ECO:0007669"/>
    <property type="project" value="UniProtKB-KW"/>
</dbReference>
<dbReference type="GO" id="GO:0090729">
    <property type="term" value="F:toxin activity"/>
    <property type="evidence" value="ECO:0007669"/>
    <property type="project" value="UniProtKB-KW"/>
</dbReference>
<dbReference type="Gene3D" id="3.30.30.10">
    <property type="entry name" value="Knottin, scorpion toxin-like"/>
    <property type="match status" value="1"/>
</dbReference>
<dbReference type="InterPro" id="IPR036574">
    <property type="entry name" value="Scorpion_toxin-like_sf"/>
</dbReference>
<dbReference type="InterPro" id="IPR001947">
    <property type="entry name" value="Scorpion_toxinS_K_inh"/>
</dbReference>
<dbReference type="Pfam" id="PF00451">
    <property type="entry name" value="Toxin_2"/>
    <property type="match status" value="1"/>
</dbReference>
<dbReference type="PRINTS" id="PR00286">
    <property type="entry name" value="CHARYBDTOXIN"/>
</dbReference>
<dbReference type="SUPFAM" id="SSF57095">
    <property type="entry name" value="Scorpion toxin-like"/>
    <property type="match status" value="1"/>
</dbReference>
<dbReference type="PROSITE" id="PS01138">
    <property type="entry name" value="SCORP_SHORT_TOXIN"/>
    <property type="match status" value="1"/>
</dbReference>
<protein>
    <recommendedName>
        <fullName>Potassium channel toxin alpha-KTx 1.2</fullName>
    </recommendedName>
    <alternativeName>
        <fullName evidence="6">ChTX-Lq2</fullName>
    </alternativeName>
    <alternativeName>
        <fullName>ChTx-d</fullName>
    </alternativeName>
    <alternativeName>
        <fullName evidence="7">Charybdotoxin-2</fullName>
        <shortName>ChTx-2</shortName>
    </alternativeName>
    <alternativeName>
        <fullName>Lqh 18-2</fullName>
    </alternativeName>
    <alternativeName>
        <fullName evidence="7">Toxin 18-2</fullName>
    </alternativeName>
</protein>
<proteinExistence type="evidence at protein level"/>
<feature type="signal peptide" evidence="4">
    <location>
        <begin position="1"/>
        <end position="22"/>
    </location>
</feature>
<feature type="chain" id="PRO_0000035309" description="Potassium channel toxin alpha-KTx 1.2" evidence="4">
    <location>
        <begin position="23"/>
        <end position="59"/>
    </location>
</feature>
<feature type="region of interest" description="Interaction with Ca(2+)-activated K(+) channels" evidence="2">
    <location>
        <begin position="48"/>
        <end position="55"/>
    </location>
</feature>
<feature type="site" description="Basic residue of the functional dyad" evidence="1">
    <location>
        <position position="49"/>
    </location>
</feature>
<feature type="site" description="Aromatic residue of the functional dyad" evidence="1">
    <location>
        <position position="58"/>
    </location>
</feature>
<feature type="modified residue" description="Pyrrolidone carboxylic acid" evidence="4">
    <location>
        <position position="23"/>
    </location>
</feature>
<feature type="disulfide bond" evidence="3 10">
    <location>
        <begin position="29"/>
        <end position="50"/>
    </location>
</feature>
<feature type="disulfide bond" evidence="3 10">
    <location>
        <begin position="35"/>
        <end position="55"/>
    </location>
</feature>
<feature type="disulfide bond" evidence="3 10">
    <location>
        <begin position="39"/>
        <end position="57"/>
    </location>
</feature>
<feature type="helix" evidence="11">
    <location>
        <begin position="32"/>
        <end position="43"/>
    </location>
</feature>
<feature type="strand" evidence="11">
    <location>
        <begin position="48"/>
        <end position="51"/>
    </location>
</feature>
<feature type="strand" evidence="11">
    <location>
        <begin position="54"/>
        <end position="57"/>
    </location>
</feature>
<sequence>MKILSVLLLALIICSIIDWSEGQFTQESCTASNQCWSICKRLHNTNRGKCMNKKCRCYS</sequence>
<organism>
    <name type="scientific">Leiurus hebraeus</name>
    <name type="common">Hebrew deathstalker scorpion</name>
    <name type="synonym">Leiurus quinquestriatus hebraeus</name>
    <dbReference type="NCBI Taxonomy" id="2899558"/>
    <lineage>
        <taxon>Eukaryota</taxon>
        <taxon>Metazoa</taxon>
        <taxon>Ecdysozoa</taxon>
        <taxon>Arthropoda</taxon>
        <taxon>Chelicerata</taxon>
        <taxon>Arachnida</taxon>
        <taxon>Scorpiones</taxon>
        <taxon>Buthida</taxon>
        <taxon>Buthoidea</taxon>
        <taxon>Buthidae</taxon>
        <taxon>Leiurus</taxon>
    </lineage>
</organism>
<accession>P45628</accession>